<dbReference type="EC" id="3.4.25.2" evidence="1"/>
<dbReference type="EMBL" id="CP000112">
    <property type="protein sequence ID" value="ABB38921.1"/>
    <property type="molecule type" value="Genomic_DNA"/>
</dbReference>
<dbReference type="RefSeq" id="WP_011368024.1">
    <property type="nucleotide sequence ID" value="NC_007519.1"/>
</dbReference>
<dbReference type="SMR" id="Q30ZH5"/>
<dbReference type="STRING" id="207559.Dde_2124"/>
<dbReference type="MEROPS" id="T01.007"/>
<dbReference type="KEGG" id="dde:Dde_2124"/>
<dbReference type="eggNOG" id="COG5405">
    <property type="taxonomic scope" value="Bacteria"/>
</dbReference>
<dbReference type="HOGENOM" id="CLU_093872_1_0_7"/>
<dbReference type="Proteomes" id="UP000002710">
    <property type="component" value="Chromosome"/>
</dbReference>
<dbReference type="GO" id="GO:0009376">
    <property type="term" value="C:HslUV protease complex"/>
    <property type="evidence" value="ECO:0007669"/>
    <property type="project" value="UniProtKB-UniRule"/>
</dbReference>
<dbReference type="GO" id="GO:0005839">
    <property type="term" value="C:proteasome core complex"/>
    <property type="evidence" value="ECO:0007669"/>
    <property type="project" value="InterPro"/>
</dbReference>
<dbReference type="GO" id="GO:0046872">
    <property type="term" value="F:metal ion binding"/>
    <property type="evidence" value="ECO:0007669"/>
    <property type="project" value="UniProtKB-KW"/>
</dbReference>
<dbReference type="GO" id="GO:0004298">
    <property type="term" value="F:threonine-type endopeptidase activity"/>
    <property type="evidence" value="ECO:0007669"/>
    <property type="project" value="UniProtKB-KW"/>
</dbReference>
<dbReference type="GO" id="GO:0051603">
    <property type="term" value="P:proteolysis involved in protein catabolic process"/>
    <property type="evidence" value="ECO:0007669"/>
    <property type="project" value="InterPro"/>
</dbReference>
<dbReference type="CDD" id="cd01913">
    <property type="entry name" value="protease_HslV"/>
    <property type="match status" value="1"/>
</dbReference>
<dbReference type="Gene3D" id="3.60.20.10">
    <property type="entry name" value="Glutamine Phosphoribosylpyrophosphate, subunit 1, domain 1"/>
    <property type="match status" value="1"/>
</dbReference>
<dbReference type="HAMAP" id="MF_00248">
    <property type="entry name" value="HslV"/>
    <property type="match status" value="1"/>
</dbReference>
<dbReference type="InterPro" id="IPR022281">
    <property type="entry name" value="ATP-dep_Prtase_HsIV_su"/>
</dbReference>
<dbReference type="InterPro" id="IPR029055">
    <property type="entry name" value="Ntn_hydrolases_N"/>
</dbReference>
<dbReference type="InterPro" id="IPR001353">
    <property type="entry name" value="Proteasome_sua/b"/>
</dbReference>
<dbReference type="InterPro" id="IPR023333">
    <property type="entry name" value="Proteasome_suB-type"/>
</dbReference>
<dbReference type="NCBIfam" id="TIGR03692">
    <property type="entry name" value="ATP_dep_HslV"/>
    <property type="match status" value="1"/>
</dbReference>
<dbReference type="NCBIfam" id="NF003964">
    <property type="entry name" value="PRK05456.1"/>
    <property type="match status" value="1"/>
</dbReference>
<dbReference type="PANTHER" id="PTHR32194:SF0">
    <property type="entry name" value="ATP-DEPENDENT PROTEASE SUBUNIT HSLV"/>
    <property type="match status" value="1"/>
</dbReference>
<dbReference type="PANTHER" id="PTHR32194">
    <property type="entry name" value="METALLOPROTEASE TLDD"/>
    <property type="match status" value="1"/>
</dbReference>
<dbReference type="Pfam" id="PF00227">
    <property type="entry name" value="Proteasome"/>
    <property type="match status" value="1"/>
</dbReference>
<dbReference type="PIRSF" id="PIRSF039093">
    <property type="entry name" value="HslV"/>
    <property type="match status" value="1"/>
</dbReference>
<dbReference type="SUPFAM" id="SSF56235">
    <property type="entry name" value="N-terminal nucleophile aminohydrolases (Ntn hydrolases)"/>
    <property type="match status" value="1"/>
</dbReference>
<dbReference type="PROSITE" id="PS51476">
    <property type="entry name" value="PROTEASOME_BETA_2"/>
    <property type="match status" value="1"/>
</dbReference>
<comment type="function">
    <text evidence="1">Protease subunit of a proteasome-like degradation complex believed to be a general protein degrading machinery.</text>
</comment>
<comment type="catalytic activity">
    <reaction evidence="1">
        <text>ATP-dependent cleavage of peptide bonds with broad specificity.</text>
        <dbReference type="EC" id="3.4.25.2"/>
    </reaction>
</comment>
<comment type="activity regulation">
    <text evidence="1">Allosterically activated by HslU binding.</text>
</comment>
<comment type="subunit">
    <text evidence="1">A double ring-shaped homohexamer of HslV is capped on each side by a ring-shaped HslU homohexamer. The assembly of the HslU/HslV complex is dependent on binding of ATP.</text>
</comment>
<comment type="subcellular location">
    <subcellularLocation>
        <location evidence="1">Cytoplasm</location>
    </subcellularLocation>
</comment>
<comment type="similarity">
    <text evidence="1">Belongs to the peptidase T1B family. HslV subfamily.</text>
</comment>
<gene>
    <name evidence="1" type="primary">hslV</name>
    <name type="ordered locus">Dde_2124</name>
</gene>
<protein>
    <recommendedName>
        <fullName evidence="1">ATP-dependent protease subunit HslV</fullName>
        <ecNumber evidence="1">3.4.25.2</ecNumber>
    </recommendedName>
</protein>
<organism>
    <name type="scientific">Oleidesulfovibrio alaskensis (strain ATCC BAA-1058 / DSM 17464 / G20)</name>
    <name type="common">Desulfovibrio alaskensis</name>
    <dbReference type="NCBI Taxonomy" id="207559"/>
    <lineage>
        <taxon>Bacteria</taxon>
        <taxon>Pseudomonadati</taxon>
        <taxon>Thermodesulfobacteriota</taxon>
        <taxon>Desulfovibrionia</taxon>
        <taxon>Desulfovibrionales</taxon>
        <taxon>Desulfovibrionaceae</taxon>
        <taxon>Oleidesulfovibrio</taxon>
    </lineage>
</organism>
<sequence>MDLKGTTILAVKDDEGVSMAGDGQVTLGQAIVMKHGARKVRRIYKDRIIAGFAGSTADAFTLFERFEAKLEEFGGNLLRASVEMAKDWRKDKFLRRLEAMLLVSDGTTLLMLSGTGDVIEPDDGVAAIGSGGPYALAAARALQRHTALSAQEIVTKAMAIAGELCVFTNDHLTVENARRA</sequence>
<feature type="chain" id="PRO_1000012603" description="ATP-dependent protease subunit HslV">
    <location>
        <begin position="1"/>
        <end position="180"/>
    </location>
</feature>
<feature type="active site" evidence="1">
    <location>
        <position position="6"/>
    </location>
</feature>
<feature type="binding site" evidence="1">
    <location>
        <position position="162"/>
    </location>
    <ligand>
        <name>Na(+)</name>
        <dbReference type="ChEBI" id="CHEBI:29101"/>
    </ligand>
</feature>
<feature type="binding site" evidence="1">
    <location>
        <position position="165"/>
    </location>
    <ligand>
        <name>Na(+)</name>
        <dbReference type="ChEBI" id="CHEBI:29101"/>
    </ligand>
</feature>
<feature type="binding site" evidence="1">
    <location>
        <position position="168"/>
    </location>
    <ligand>
        <name>Na(+)</name>
        <dbReference type="ChEBI" id="CHEBI:29101"/>
    </ligand>
</feature>
<evidence type="ECO:0000255" key="1">
    <source>
        <dbReference type="HAMAP-Rule" id="MF_00248"/>
    </source>
</evidence>
<reference key="1">
    <citation type="journal article" date="2011" name="J. Bacteriol.">
        <title>Complete genome sequence and updated annotation of Desulfovibrio alaskensis G20.</title>
        <authorList>
            <person name="Hauser L.J."/>
            <person name="Land M.L."/>
            <person name="Brown S.D."/>
            <person name="Larimer F."/>
            <person name="Keller K.L."/>
            <person name="Rapp-Giles B.J."/>
            <person name="Price M.N."/>
            <person name="Lin M."/>
            <person name="Bruce D.C."/>
            <person name="Detter J.C."/>
            <person name="Tapia R."/>
            <person name="Han C.S."/>
            <person name="Goodwin L.A."/>
            <person name="Cheng J.F."/>
            <person name="Pitluck S."/>
            <person name="Copeland A."/>
            <person name="Lucas S."/>
            <person name="Nolan M."/>
            <person name="Lapidus A.L."/>
            <person name="Palumbo A.V."/>
            <person name="Wall J.D."/>
        </authorList>
    </citation>
    <scope>NUCLEOTIDE SEQUENCE [LARGE SCALE GENOMIC DNA]</scope>
    <source>
        <strain>ATCC BAA-1058 / DSM 17464 / G20</strain>
    </source>
</reference>
<name>HSLV_OLEA2</name>
<accession>Q30ZH5</accession>
<keyword id="KW-0021">Allosteric enzyme</keyword>
<keyword id="KW-0963">Cytoplasm</keyword>
<keyword id="KW-0378">Hydrolase</keyword>
<keyword id="KW-0479">Metal-binding</keyword>
<keyword id="KW-0645">Protease</keyword>
<keyword id="KW-1185">Reference proteome</keyword>
<keyword id="KW-0915">Sodium</keyword>
<keyword id="KW-0888">Threonine protease</keyword>
<proteinExistence type="inferred from homology"/>